<reference key="1">
    <citation type="journal article" date="1999" name="DNA Res.">
        <title>Structural analysis of Arabidopsis thaliana chromosome 5. IX. Sequence features of the regions of 1,011,550 bp covered by seventeen P1 and TAC clones.</title>
        <authorList>
            <person name="Kaneko T."/>
            <person name="Katoh T."/>
            <person name="Sato S."/>
            <person name="Nakamura Y."/>
            <person name="Asamizu E."/>
            <person name="Kotani H."/>
            <person name="Miyajima N."/>
            <person name="Tabata S."/>
        </authorList>
    </citation>
    <scope>NUCLEOTIDE SEQUENCE [LARGE SCALE GENOMIC DNA]</scope>
    <source>
        <strain>cv. Columbia</strain>
    </source>
</reference>
<reference key="2">
    <citation type="journal article" date="2017" name="Plant J.">
        <title>Araport11: a complete reannotation of the Arabidopsis thaliana reference genome.</title>
        <authorList>
            <person name="Cheng C.Y."/>
            <person name="Krishnakumar V."/>
            <person name="Chan A.P."/>
            <person name="Thibaud-Nissen F."/>
            <person name="Schobel S."/>
            <person name="Town C.D."/>
        </authorList>
    </citation>
    <scope>GENOME REANNOTATION</scope>
    <source>
        <strain>cv. Columbia</strain>
    </source>
</reference>
<reference key="3">
    <citation type="submission" date="2004-09" db="EMBL/GenBank/DDBJ databases">
        <title>Large-scale analysis of RIKEN Arabidopsis full-length (RAFL) cDNAs.</title>
        <authorList>
            <person name="Totoki Y."/>
            <person name="Seki M."/>
            <person name="Ishida J."/>
            <person name="Nakajima M."/>
            <person name="Enju A."/>
            <person name="Kamiya A."/>
            <person name="Narusaka M."/>
            <person name="Shin-i T."/>
            <person name="Nakagawa M."/>
            <person name="Sakamoto N."/>
            <person name="Oishi K."/>
            <person name="Kohara Y."/>
            <person name="Kobayashi M."/>
            <person name="Toyoda A."/>
            <person name="Sakaki Y."/>
            <person name="Sakurai T."/>
            <person name="Iida K."/>
            <person name="Akiyama K."/>
            <person name="Satou M."/>
            <person name="Toyoda T."/>
            <person name="Konagaya A."/>
            <person name="Carninci P."/>
            <person name="Kawai J."/>
            <person name="Hayashizaki Y."/>
            <person name="Shinozaki K."/>
        </authorList>
    </citation>
    <scope>NUCLEOTIDE SEQUENCE [LARGE SCALE MRNA]</scope>
    <source>
        <strain>cv. Columbia</strain>
    </source>
</reference>
<reference key="4">
    <citation type="journal article" date="2003" name="Science">
        <title>Empirical analysis of transcriptional activity in the Arabidopsis genome.</title>
        <authorList>
            <person name="Yamada K."/>
            <person name="Lim J."/>
            <person name="Dale J.M."/>
            <person name="Chen H."/>
            <person name="Shinn P."/>
            <person name="Palm C.J."/>
            <person name="Southwick A.M."/>
            <person name="Wu H.C."/>
            <person name="Kim C.J."/>
            <person name="Nguyen M."/>
            <person name="Pham P.K."/>
            <person name="Cheuk R.F."/>
            <person name="Karlin-Newmann G."/>
            <person name="Liu S.X."/>
            <person name="Lam B."/>
            <person name="Sakano H."/>
            <person name="Wu T."/>
            <person name="Yu G."/>
            <person name="Miranda M."/>
            <person name="Quach H.L."/>
            <person name="Tripp M."/>
            <person name="Chang C.H."/>
            <person name="Lee J.M."/>
            <person name="Toriumi M.J."/>
            <person name="Chan M.M."/>
            <person name="Tang C.C."/>
            <person name="Onodera C.S."/>
            <person name="Deng J.M."/>
            <person name="Akiyama K."/>
            <person name="Ansari Y."/>
            <person name="Arakawa T."/>
            <person name="Banh J."/>
            <person name="Banno F."/>
            <person name="Bowser L."/>
            <person name="Brooks S.Y."/>
            <person name="Carninci P."/>
            <person name="Chao Q."/>
            <person name="Choy N."/>
            <person name="Enju A."/>
            <person name="Goldsmith A.D."/>
            <person name="Gurjal M."/>
            <person name="Hansen N.F."/>
            <person name="Hayashizaki Y."/>
            <person name="Johnson-Hopson C."/>
            <person name="Hsuan V.W."/>
            <person name="Iida K."/>
            <person name="Karnes M."/>
            <person name="Khan S."/>
            <person name="Koesema E."/>
            <person name="Ishida J."/>
            <person name="Jiang P.X."/>
            <person name="Jones T."/>
            <person name="Kawai J."/>
            <person name="Kamiya A."/>
            <person name="Meyers C."/>
            <person name="Nakajima M."/>
            <person name="Narusaka M."/>
            <person name="Seki M."/>
            <person name="Sakurai T."/>
            <person name="Satou M."/>
            <person name="Tamse R."/>
            <person name="Vaysberg M."/>
            <person name="Wallender E.K."/>
            <person name="Wong C."/>
            <person name="Yamamura Y."/>
            <person name="Yuan S."/>
            <person name="Shinozaki K."/>
            <person name="Davis R.W."/>
            <person name="Theologis A."/>
            <person name="Ecker J.R."/>
        </authorList>
    </citation>
    <scope>NUCLEOTIDE SEQUENCE [LARGE SCALE MRNA] OF 38-370</scope>
    <source>
        <strain>cv. Columbia</strain>
    </source>
</reference>
<reference key="5">
    <citation type="journal article" date="2011" name="Plant J.">
        <title>Characterization of the Arabidopsis glycerophosphodiester phosphodiesterase (GDPD) family reveals a role of the plastid-localized AtGDPD1 in maintaining cellular phosphate homeostasis under phosphate starvation.</title>
        <authorList>
            <person name="Cheng Y."/>
            <person name="Zhou W."/>
            <person name="El Sheery N.I."/>
            <person name="Peters C."/>
            <person name="Li M."/>
            <person name="Wang X."/>
            <person name="Huang J."/>
        </authorList>
    </citation>
    <scope>TISSUE SPECIFICITY</scope>
    <scope>INDUCTION</scope>
    <scope>GENE FAMILY</scope>
    <scope>NOMENCLATURE</scope>
</reference>
<sequence>MALETMTLSLSSSAMLSSGVVEDDKKQEAIVFPKFVLMGHRGFGMNMLQSPDEKMKFIKENSLLSFNVAADFPIDFIEFDVQVTRDGCPVIFHDIFMFTQEQGVIIEKRVTEMDLHEFLSYGPQRDGTNVKPMWRKTKDGRIFEWKVEKDDPLCTLEDAFLNVKHSLGFNIELKFDDNTVYGEGELRQTLDNILTVVNEHSKNRPIIFSSFHPDAARLIRNMQRCYPVFFLTNGGCEIYKDVRRNSLDEAIKLCKESGLQGLVSEVKAILRTPNAITRVKDSKLSLLSYGQLNNVVEVIYLQYLMGVEGVIVDMVKDISEAIANIEVTNEDDCEGEDERKCLIRFGEERKKVEITKDMITLLNKFVPKLL</sequence>
<dbReference type="EC" id="3.1.4.46" evidence="1"/>
<dbReference type="EMBL" id="AB017070">
    <property type="protein sequence ID" value="BAB10593.1"/>
    <property type="status" value="ALT_SEQ"/>
    <property type="molecule type" value="Genomic_DNA"/>
</dbReference>
<dbReference type="EMBL" id="CP002688">
    <property type="protein sequence ID" value="AED94940.1"/>
    <property type="molecule type" value="Genomic_DNA"/>
</dbReference>
<dbReference type="EMBL" id="AK175961">
    <property type="protein sequence ID" value="BAD43724.1"/>
    <property type="molecule type" value="mRNA"/>
</dbReference>
<dbReference type="EMBL" id="BT010420">
    <property type="protein sequence ID" value="AAQ62421.1"/>
    <property type="molecule type" value="mRNA"/>
</dbReference>
<dbReference type="RefSeq" id="NP_199144.3">
    <property type="nucleotide sequence ID" value="NM_123696.5"/>
</dbReference>
<dbReference type="SMR" id="Q680A6"/>
<dbReference type="STRING" id="3702.Q680A6"/>
<dbReference type="iPTMnet" id="Q680A6"/>
<dbReference type="PaxDb" id="3702-AT5G43300.1"/>
<dbReference type="ProteomicsDB" id="247116"/>
<dbReference type="EnsemblPlants" id="AT5G43300.1">
    <property type="protein sequence ID" value="AT5G43300.1"/>
    <property type="gene ID" value="AT5G43300"/>
</dbReference>
<dbReference type="GeneID" id="834348"/>
<dbReference type="Gramene" id="AT5G43300.1">
    <property type="protein sequence ID" value="AT5G43300.1"/>
    <property type="gene ID" value="AT5G43300"/>
</dbReference>
<dbReference type="KEGG" id="ath:AT5G43300"/>
<dbReference type="Araport" id="AT5G43300"/>
<dbReference type="TAIR" id="AT5G43300">
    <property type="gene designation" value="GDPD3"/>
</dbReference>
<dbReference type="eggNOG" id="KOG2421">
    <property type="taxonomic scope" value="Eukaryota"/>
</dbReference>
<dbReference type="HOGENOM" id="CLU_013007_0_0_1"/>
<dbReference type="InParanoid" id="Q680A6"/>
<dbReference type="OMA" id="TICGYEW"/>
<dbReference type="PhylomeDB" id="Q680A6"/>
<dbReference type="PRO" id="PR:Q680A6"/>
<dbReference type="Proteomes" id="UP000006548">
    <property type="component" value="Chromosome 5"/>
</dbReference>
<dbReference type="ExpressionAtlas" id="Q680A6">
    <property type="expression patterns" value="baseline and differential"/>
</dbReference>
<dbReference type="GO" id="GO:0008889">
    <property type="term" value="F:glycerophosphodiester phosphodiesterase activity"/>
    <property type="evidence" value="ECO:0007669"/>
    <property type="project" value="UniProtKB-EC"/>
</dbReference>
<dbReference type="GO" id="GO:0006071">
    <property type="term" value="P:glycerol metabolic process"/>
    <property type="evidence" value="ECO:0007669"/>
    <property type="project" value="UniProtKB-KW"/>
</dbReference>
<dbReference type="GO" id="GO:0006629">
    <property type="term" value="P:lipid metabolic process"/>
    <property type="evidence" value="ECO:0007669"/>
    <property type="project" value="InterPro"/>
</dbReference>
<dbReference type="FunFam" id="3.20.20.190:FF:000034">
    <property type="entry name" value="Glycerophosphodiester phosphodiesterase GDPD2"/>
    <property type="match status" value="1"/>
</dbReference>
<dbReference type="Gene3D" id="3.20.20.190">
    <property type="entry name" value="Phosphatidylinositol (PI) phosphodiesterase"/>
    <property type="match status" value="1"/>
</dbReference>
<dbReference type="InterPro" id="IPR051578">
    <property type="entry name" value="GDPD"/>
</dbReference>
<dbReference type="InterPro" id="IPR030395">
    <property type="entry name" value="GP_PDE_dom"/>
</dbReference>
<dbReference type="InterPro" id="IPR017946">
    <property type="entry name" value="PLC-like_Pdiesterase_TIM-brl"/>
</dbReference>
<dbReference type="PANTHER" id="PTHR22958:SF34">
    <property type="entry name" value="GLYCEROPHOSPHODIESTER PHOSPHODIESTERASE GDPD3"/>
    <property type="match status" value="1"/>
</dbReference>
<dbReference type="PANTHER" id="PTHR22958">
    <property type="entry name" value="GLYCEROPHOSPHORYL DIESTER PHOSPHODIESTERASE"/>
    <property type="match status" value="1"/>
</dbReference>
<dbReference type="Pfam" id="PF03009">
    <property type="entry name" value="GDPD"/>
    <property type="match status" value="1"/>
</dbReference>
<dbReference type="SUPFAM" id="SSF51695">
    <property type="entry name" value="PLC-like phosphodiesterases"/>
    <property type="match status" value="1"/>
</dbReference>
<dbReference type="PROSITE" id="PS51704">
    <property type="entry name" value="GP_PDE"/>
    <property type="match status" value="1"/>
</dbReference>
<proteinExistence type="evidence at transcript level"/>
<organism>
    <name type="scientific">Arabidopsis thaliana</name>
    <name type="common">Mouse-ear cress</name>
    <dbReference type="NCBI Taxonomy" id="3702"/>
    <lineage>
        <taxon>Eukaryota</taxon>
        <taxon>Viridiplantae</taxon>
        <taxon>Streptophyta</taxon>
        <taxon>Embryophyta</taxon>
        <taxon>Tracheophyta</taxon>
        <taxon>Spermatophyta</taxon>
        <taxon>Magnoliopsida</taxon>
        <taxon>eudicotyledons</taxon>
        <taxon>Gunneridae</taxon>
        <taxon>Pentapetalae</taxon>
        <taxon>rosids</taxon>
        <taxon>malvids</taxon>
        <taxon>Brassicales</taxon>
        <taxon>Brassicaceae</taxon>
        <taxon>Camelineae</taxon>
        <taxon>Arabidopsis</taxon>
    </lineage>
</organism>
<gene>
    <name evidence="3" type="primary">GDPD3</name>
    <name evidence="5" type="ordered locus">At5g43300</name>
    <name evidence="6" type="ORF">MNL12.12</name>
</gene>
<accession>Q680A6</accession>
<accession>Q6NQN1</accession>
<accession>Q9FHR6</accession>
<comment type="catalytic activity">
    <reaction evidence="1">
        <text>a sn-glycero-3-phosphodiester + H2O = an alcohol + sn-glycerol 3-phosphate + H(+)</text>
        <dbReference type="Rhea" id="RHEA:12969"/>
        <dbReference type="ChEBI" id="CHEBI:15377"/>
        <dbReference type="ChEBI" id="CHEBI:15378"/>
        <dbReference type="ChEBI" id="CHEBI:30879"/>
        <dbReference type="ChEBI" id="CHEBI:57597"/>
        <dbReference type="ChEBI" id="CHEBI:83408"/>
        <dbReference type="EC" id="3.1.4.46"/>
    </reaction>
</comment>
<comment type="tissue specificity">
    <text evidence="2">Expressed in flowers and siliques.</text>
</comment>
<comment type="induction">
    <text evidence="2">By phosphate starvation.</text>
</comment>
<comment type="similarity">
    <text evidence="4">Belongs to the glycerophosphoryl diester phosphodiesterase family.</text>
</comment>
<comment type="sequence caution">
    <conflict type="erroneous gene model prediction">
        <sequence resource="EMBL-CDS" id="BAB10593"/>
    </conflict>
</comment>
<name>GDPD3_ARATH</name>
<protein>
    <recommendedName>
        <fullName evidence="4">Glycerophosphodiester phosphodiesterase GDPD3</fullName>
        <ecNumber evidence="1">3.1.4.46</ecNumber>
    </recommendedName>
    <alternativeName>
        <fullName evidence="3">Glycerophosphodiester phosphodiesterase 3</fullName>
        <shortName evidence="3">ATGDPD3</shortName>
    </alternativeName>
</protein>
<feature type="chain" id="PRO_0000430609" description="Glycerophosphodiester phosphodiesterase GDPD3">
    <location>
        <begin position="1"/>
        <end position="370"/>
    </location>
</feature>
<feature type="domain" description="GP-PDE">
    <location>
        <begin position="35"/>
        <end position="322"/>
    </location>
</feature>
<keyword id="KW-0319">Glycerol metabolism</keyword>
<keyword id="KW-0378">Hydrolase</keyword>
<keyword id="KW-1185">Reference proteome</keyword>
<evidence type="ECO:0000250" key="1">
    <source>
        <dbReference type="UniProtKB" id="Q9SGA2"/>
    </source>
</evidence>
<evidence type="ECO:0000269" key="2">
    <source>
    </source>
</evidence>
<evidence type="ECO:0000303" key="3">
    <source>
    </source>
</evidence>
<evidence type="ECO:0000305" key="4"/>
<evidence type="ECO:0000312" key="5">
    <source>
        <dbReference type="Araport" id="AT5G43300"/>
    </source>
</evidence>
<evidence type="ECO:0000312" key="6">
    <source>
        <dbReference type="EMBL" id="BAB10593.1"/>
    </source>
</evidence>